<accession>Q4A8S6</accession>
<comment type="function">
    <text evidence="1">Part of the Sec protein translocase complex. Interacts with the SecYEG preprotein conducting channel. Has a central role in coupling the hydrolysis of ATP to the transfer of proteins into and across the cell membrane, serving as an ATP-driven molecular motor driving the stepwise translocation of polypeptide chains across the membrane.</text>
</comment>
<comment type="catalytic activity">
    <reaction evidence="1">
        <text>ATP + H2O + cellular proteinSide 1 = ADP + phosphate + cellular proteinSide 2.</text>
        <dbReference type="EC" id="7.4.2.8"/>
    </reaction>
</comment>
<comment type="subunit">
    <text evidence="1">Monomer and homodimer. Part of the essential Sec protein translocation apparatus which comprises SecA, SecYEG and auxiliary proteins SecDF. Other proteins may also be involved.</text>
</comment>
<comment type="subcellular location">
    <subcellularLocation>
        <location evidence="1">Cell membrane</location>
        <topology evidence="1">Peripheral membrane protein</topology>
        <orientation evidence="1">Cytoplasmic side</orientation>
    </subcellularLocation>
    <subcellularLocation>
        <location evidence="1">Cytoplasm</location>
    </subcellularLocation>
    <text evidence="1">Distribution is 50-50.</text>
</comment>
<comment type="similarity">
    <text evidence="1">Belongs to the SecA family.</text>
</comment>
<comment type="sequence caution" evidence="3">
    <conflict type="erroneous initiation">
        <sequence resource="EMBL-CDS" id="AAZ53463"/>
    </conflict>
    <text>Truncated N-terminus.</text>
</comment>
<gene>
    <name evidence="1" type="primary">secA</name>
    <name type="ordered locus">MHP7448_0086</name>
</gene>
<organism>
    <name type="scientific">Mesomycoplasma hyopneumoniae (strain 7448)</name>
    <name type="common">Mycoplasma hyopneumoniae</name>
    <dbReference type="NCBI Taxonomy" id="262722"/>
    <lineage>
        <taxon>Bacteria</taxon>
        <taxon>Bacillati</taxon>
        <taxon>Mycoplasmatota</taxon>
        <taxon>Mycoplasmoidales</taxon>
        <taxon>Metamycoplasmataceae</taxon>
        <taxon>Mesomycoplasma</taxon>
    </lineage>
</organism>
<protein>
    <recommendedName>
        <fullName evidence="1">Protein translocase subunit SecA</fullName>
        <ecNumber evidence="1">7.4.2.8</ecNumber>
    </recommendedName>
</protein>
<name>SECA_MESH7</name>
<keyword id="KW-0067">ATP-binding</keyword>
<keyword id="KW-1003">Cell membrane</keyword>
<keyword id="KW-0963">Cytoplasm</keyword>
<keyword id="KW-0472">Membrane</keyword>
<keyword id="KW-0547">Nucleotide-binding</keyword>
<keyword id="KW-0653">Protein transport</keyword>
<keyword id="KW-1278">Translocase</keyword>
<keyword id="KW-0811">Translocation</keyword>
<keyword id="KW-0813">Transport</keyword>
<dbReference type="EC" id="7.4.2.8" evidence="1"/>
<dbReference type="EMBL" id="AE017244">
    <property type="protein sequence ID" value="AAZ53463.1"/>
    <property type="status" value="ALT_INIT"/>
    <property type="molecule type" value="Genomic_DNA"/>
</dbReference>
<dbReference type="RefSeq" id="WP_011289996.1">
    <property type="nucleotide sequence ID" value="NC_007332.1"/>
</dbReference>
<dbReference type="SMR" id="Q4A8S6"/>
<dbReference type="KEGG" id="mhp:MHP7448_0086"/>
<dbReference type="HOGENOM" id="CLU_005314_3_0_14"/>
<dbReference type="Proteomes" id="UP000000553">
    <property type="component" value="Chromosome"/>
</dbReference>
<dbReference type="GO" id="GO:0031522">
    <property type="term" value="C:cell envelope Sec protein transport complex"/>
    <property type="evidence" value="ECO:0007669"/>
    <property type="project" value="TreeGrafter"/>
</dbReference>
<dbReference type="GO" id="GO:0005829">
    <property type="term" value="C:cytosol"/>
    <property type="evidence" value="ECO:0007669"/>
    <property type="project" value="TreeGrafter"/>
</dbReference>
<dbReference type="GO" id="GO:0005886">
    <property type="term" value="C:plasma membrane"/>
    <property type="evidence" value="ECO:0007669"/>
    <property type="project" value="UniProtKB-SubCell"/>
</dbReference>
<dbReference type="GO" id="GO:0005524">
    <property type="term" value="F:ATP binding"/>
    <property type="evidence" value="ECO:0007669"/>
    <property type="project" value="UniProtKB-UniRule"/>
</dbReference>
<dbReference type="GO" id="GO:0008564">
    <property type="term" value="F:protein-exporting ATPase activity"/>
    <property type="evidence" value="ECO:0007669"/>
    <property type="project" value="UniProtKB-EC"/>
</dbReference>
<dbReference type="GO" id="GO:0065002">
    <property type="term" value="P:intracellular protein transmembrane transport"/>
    <property type="evidence" value="ECO:0007669"/>
    <property type="project" value="UniProtKB-UniRule"/>
</dbReference>
<dbReference type="GO" id="GO:0017038">
    <property type="term" value="P:protein import"/>
    <property type="evidence" value="ECO:0007669"/>
    <property type="project" value="InterPro"/>
</dbReference>
<dbReference type="GO" id="GO:0006605">
    <property type="term" value="P:protein targeting"/>
    <property type="evidence" value="ECO:0007669"/>
    <property type="project" value="UniProtKB-UniRule"/>
</dbReference>
<dbReference type="GO" id="GO:0043952">
    <property type="term" value="P:protein transport by the Sec complex"/>
    <property type="evidence" value="ECO:0007669"/>
    <property type="project" value="TreeGrafter"/>
</dbReference>
<dbReference type="CDD" id="cd17928">
    <property type="entry name" value="DEXDc_SecA"/>
    <property type="match status" value="1"/>
</dbReference>
<dbReference type="CDD" id="cd18803">
    <property type="entry name" value="SF2_C_secA"/>
    <property type="match status" value="1"/>
</dbReference>
<dbReference type="FunFam" id="3.40.50.300:FF:000429">
    <property type="entry name" value="Preprotein translocase subunit SecA"/>
    <property type="match status" value="1"/>
</dbReference>
<dbReference type="Gene3D" id="1.10.3060.10">
    <property type="entry name" value="Helical scaffold and wing domains of SecA"/>
    <property type="match status" value="1"/>
</dbReference>
<dbReference type="Gene3D" id="3.40.50.300">
    <property type="entry name" value="P-loop containing nucleotide triphosphate hydrolases"/>
    <property type="match status" value="3"/>
</dbReference>
<dbReference type="Gene3D" id="3.90.1440.10">
    <property type="entry name" value="SecA, preprotein cross-linking domain"/>
    <property type="match status" value="1"/>
</dbReference>
<dbReference type="HAMAP" id="MF_01382">
    <property type="entry name" value="SecA"/>
    <property type="match status" value="1"/>
</dbReference>
<dbReference type="InterPro" id="IPR014001">
    <property type="entry name" value="Helicase_ATP-bd"/>
</dbReference>
<dbReference type="InterPro" id="IPR001650">
    <property type="entry name" value="Helicase_C-like"/>
</dbReference>
<dbReference type="InterPro" id="IPR027417">
    <property type="entry name" value="P-loop_NTPase"/>
</dbReference>
<dbReference type="InterPro" id="IPR000185">
    <property type="entry name" value="SecA"/>
</dbReference>
<dbReference type="InterPro" id="IPR020937">
    <property type="entry name" value="SecA_CS"/>
</dbReference>
<dbReference type="InterPro" id="IPR011115">
    <property type="entry name" value="SecA_DEAD"/>
</dbReference>
<dbReference type="InterPro" id="IPR014018">
    <property type="entry name" value="SecA_motor_DEAD"/>
</dbReference>
<dbReference type="InterPro" id="IPR011130">
    <property type="entry name" value="SecA_preprotein_X-link_dom"/>
</dbReference>
<dbReference type="InterPro" id="IPR044722">
    <property type="entry name" value="SecA_SF2_C"/>
</dbReference>
<dbReference type="InterPro" id="IPR011116">
    <property type="entry name" value="SecA_Wing/Scaffold"/>
</dbReference>
<dbReference type="InterPro" id="IPR036266">
    <property type="entry name" value="SecA_Wing/Scaffold_sf"/>
</dbReference>
<dbReference type="InterPro" id="IPR036670">
    <property type="entry name" value="SecA_X-link_sf"/>
</dbReference>
<dbReference type="NCBIfam" id="NF006630">
    <property type="entry name" value="PRK09200.1"/>
    <property type="match status" value="1"/>
</dbReference>
<dbReference type="NCBIfam" id="TIGR00963">
    <property type="entry name" value="secA"/>
    <property type="match status" value="1"/>
</dbReference>
<dbReference type="PANTHER" id="PTHR30612:SF0">
    <property type="entry name" value="CHLOROPLAST PROTEIN-TRANSPORTING ATPASE"/>
    <property type="match status" value="1"/>
</dbReference>
<dbReference type="PANTHER" id="PTHR30612">
    <property type="entry name" value="SECA INNER MEMBRANE COMPONENT OF SEC PROTEIN SECRETION SYSTEM"/>
    <property type="match status" value="1"/>
</dbReference>
<dbReference type="Pfam" id="PF21090">
    <property type="entry name" value="P-loop_SecA"/>
    <property type="match status" value="2"/>
</dbReference>
<dbReference type="Pfam" id="PF07517">
    <property type="entry name" value="SecA_DEAD"/>
    <property type="match status" value="1"/>
</dbReference>
<dbReference type="Pfam" id="PF01043">
    <property type="entry name" value="SecA_PP_bind"/>
    <property type="match status" value="1"/>
</dbReference>
<dbReference type="Pfam" id="PF07516">
    <property type="entry name" value="SecA_SW"/>
    <property type="match status" value="1"/>
</dbReference>
<dbReference type="PRINTS" id="PR00906">
    <property type="entry name" value="SECA"/>
</dbReference>
<dbReference type="SMART" id="SM00957">
    <property type="entry name" value="SecA_DEAD"/>
    <property type="match status" value="1"/>
</dbReference>
<dbReference type="SMART" id="SM00958">
    <property type="entry name" value="SecA_PP_bind"/>
    <property type="match status" value="1"/>
</dbReference>
<dbReference type="SUPFAM" id="SSF81886">
    <property type="entry name" value="Helical scaffold and wing domains of SecA"/>
    <property type="match status" value="1"/>
</dbReference>
<dbReference type="SUPFAM" id="SSF52540">
    <property type="entry name" value="P-loop containing nucleoside triphosphate hydrolases"/>
    <property type="match status" value="2"/>
</dbReference>
<dbReference type="SUPFAM" id="SSF81767">
    <property type="entry name" value="Pre-protein crosslinking domain of SecA"/>
    <property type="match status" value="1"/>
</dbReference>
<dbReference type="PROSITE" id="PS01312">
    <property type="entry name" value="SECA"/>
    <property type="match status" value="1"/>
</dbReference>
<dbReference type="PROSITE" id="PS51196">
    <property type="entry name" value="SECA_MOTOR_DEAD"/>
    <property type="match status" value="1"/>
</dbReference>
<proteinExistence type="inferred from homology"/>
<reference key="1">
    <citation type="journal article" date="2005" name="J. Bacteriol.">
        <title>Swine and poultry pathogens: the complete genome sequences of two strains of Mycoplasma hyopneumoniae and a strain of Mycoplasma synoviae.</title>
        <authorList>
            <person name="Vasconcelos A.T.R."/>
            <person name="Ferreira H.B."/>
            <person name="Bizarro C.V."/>
            <person name="Bonatto S.L."/>
            <person name="Carvalho M.O."/>
            <person name="Pinto P.M."/>
            <person name="Almeida D.F."/>
            <person name="Almeida L.G.P."/>
            <person name="Almeida R."/>
            <person name="Alves-Junior L."/>
            <person name="Assuncao E.N."/>
            <person name="Azevedo V.A.C."/>
            <person name="Bogo M.R."/>
            <person name="Brigido M.M."/>
            <person name="Brocchi M."/>
            <person name="Burity H.A."/>
            <person name="Camargo A.A."/>
            <person name="Camargo S.S."/>
            <person name="Carepo M.S."/>
            <person name="Carraro D.M."/>
            <person name="de Mattos Cascardo J.C."/>
            <person name="Castro L.A."/>
            <person name="Cavalcanti G."/>
            <person name="Chemale G."/>
            <person name="Collevatti R.G."/>
            <person name="Cunha C.W."/>
            <person name="Dallagiovanna B."/>
            <person name="Dambros B.P."/>
            <person name="Dellagostin O.A."/>
            <person name="Falcao C."/>
            <person name="Fantinatti-Garboggini F."/>
            <person name="Felipe M.S.S."/>
            <person name="Fiorentin L."/>
            <person name="Franco G.R."/>
            <person name="Freitas N.S.A."/>
            <person name="Frias D."/>
            <person name="Grangeiro T.B."/>
            <person name="Grisard E.C."/>
            <person name="Guimaraes C.T."/>
            <person name="Hungria M."/>
            <person name="Jardim S.N."/>
            <person name="Krieger M.A."/>
            <person name="Laurino J.P."/>
            <person name="Lima L.F.A."/>
            <person name="Lopes M.I."/>
            <person name="Loreto E.L.S."/>
            <person name="Madeira H.M.F."/>
            <person name="Manfio G.P."/>
            <person name="Maranhao A.Q."/>
            <person name="Martinkovics C.T."/>
            <person name="Medeiros S.R.B."/>
            <person name="Moreira M.A.M."/>
            <person name="Neiva M."/>
            <person name="Ramalho-Neto C.E."/>
            <person name="Nicolas M.F."/>
            <person name="Oliveira S.C."/>
            <person name="Paixao R.F.C."/>
            <person name="Pedrosa F.O."/>
            <person name="Pena S.D.J."/>
            <person name="Pereira M."/>
            <person name="Pereira-Ferrari L."/>
            <person name="Piffer I."/>
            <person name="Pinto L.S."/>
            <person name="Potrich D.P."/>
            <person name="Salim A.C.M."/>
            <person name="Santos F.R."/>
            <person name="Schmitt R."/>
            <person name="Schneider M.P.C."/>
            <person name="Schrank A."/>
            <person name="Schrank I.S."/>
            <person name="Schuck A.F."/>
            <person name="Seuanez H.N."/>
            <person name="Silva D.W."/>
            <person name="Silva R."/>
            <person name="Silva S.C."/>
            <person name="Soares C.M.A."/>
            <person name="Souza K.R.L."/>
            <person name="Souza R.C."/>
            <person name="Staats C.C."/>
            <person name="Steffens M.B.R."/>
            <person name="Teixeira S.M.R."/>
            <person name="Urmenyi T.P."/>
            <person name="Vainstein M.H."/>
            <person name="Zuccherato L.W."/>
            <person name="Simpson A.J.G."/>
            <person name="Zaha A."/>
        </authorList>
    </citation>
    <scope>NUCLEOTIDE SEQUENCE [LARGE SCALE GENOMIC DNA]</scope>
    <source>
        <strain>7448</strain>
    </source>
</reference>
<evidence type="ECO:0000255" key="1">
    <source>
        <dbReference type="HAMAP-Rule" id="MF_01382"/>
    </source>
</evidence>
<evidence type="ECO:0000256" key="2">
    <source>
        <dbReference type="SAM" id="MobiDB-lite"/>
    </source>
</evidence>
<evidence type="ECO:0000305" key="3"/>
<sequence>MKNLFNFFKTSSELRLAYRLLKQINQKRSFYGAMTDFDLANQTNIFKKRLANGEKLKDIRVDAFAVAREATKRILGKTPYDVQILGGLILDMGSVAEMKTGEGKTIASIPPVYLNALLGQGVIVSTVNEYLAERDAEDNGKVYNFLGLTVGINKTEMDANTKRMMYNADITYSVHSELGFDYLRDNMVFSAAEKVQRGLNFCLIDEVDSILIDEAKTPLIISGGKTNLPAQYLSANQFVNTLIAEDFYIDEETKGIKLNDKGIDKANAFFGLRNLYEIQNSEIVHRIQNALRANKVMKRDVEYIVQDGKIALVDQFTGRIMAGRSYSEGLQQALQAKEGLEIEPETKTLATITYQNFFRLFKKLSGMTGTAKTEEQEFIDVYNMRVNVIPTNKPMIRKDERDEIFATSHEKNQAIISEVERVHKRGQPILIGTSQVVDSETLSEMLNQKGLYHTVLNAKQNQLEAEIIAKAGRKNAITIATNMAGRGTDIILEPGVTELGGLYILGTDKAEARRIDNQLRGRSGRQGDVGISRFFISLQDQLFRRFTNFDQIFGAYGQTNGAIKGKYIHAVLLAAQKKIEGFNFDMRKTVLSYDDVIRQQRDLIYAQRDILLQIENFDHYIQKMIIRAVDIILSYDFIILPNQEIHYKNLINFLNDNLSRITHFNFGQIGIENYPIEQLNEFLIKQLETIYFKQIQSVLKENLGKTYFESERYIILSTLDSQWQNHIDTIDKLRSSANLVQYSQKNPYQIFTEEATKKFNILVAESAYQAIVSLFNNSNAEKIEYIKAILSDGTAISYPADSPQEIIDQIIASNEERIAAARKAKEEKQPEFIEKQLAKLKIEKVESGEEFELWKIGDNKLVNLKKEMPLDEKQNILVKMQQEQLEMMSEEEKNLIQEQNLEIEEIEEIEEEIQNENPQKVEFVDFKNDPDAYNKLIFGADYADKQLISSEEENNNEKTNININEDLERTKGEAQQTAKNPNE</sequence>
<feature type="chain" id="PRO_0000320855" description="Protein translocase subunit SecA">
    <location>
        <begin position="1"/>
        <end position="983"/>
    </location>
</feature>
<feature type="region of interest" description="Disordered" evidence="2">
    <location>
        <begin position="948"/>
        <end position="983"/>
    </location>
</feature>
<feature type="compositionally biased region" description="Polar residues" evidence="2">
    <location>
        <begin position="973"/>
        <end position="983"/>
    </location>
</feature>
<feature type="binding site" evidence="1">
    <location>
        <position position="83"/>
    </location>
    <ligand>
        <name>ATP</name>
        <dbReference type="ChEBI" id="CHEBI:30616"/>
    </ligand>
</feature>
<feature type="binding site" evidence="1">
    <location>
        <begin position="101"/>
        <end position="105"/>
    </location>
    <ligand>
        <name>ATP</name>
        <dbReference type="ChEBI" id="CHEBI:30616"/>
    </ligand>
</feature>
<feature type="binding site" evidence="1">
    <location>
        <position position="489"/>
    </location>
    <ligand>
        <name>ATP</name>
        <dbReference type="ChEBI" id="CHEBI:30616"/>
    </ligand>
</feature>